<comment type="similarity">
    <text evidence="1">Belongs to the bacterial ribosomal protein bL35 family.</text>
</comment>
<sequence>MPKMKTHRGAAKRVKRTGSGQLKRSRAFTSHLFANKNTKQKRQLRKAKLVSKSDMKRVKQLLAYKK</sequence>
<gene>
    <name evidence="1" type="primary">rpmI</name>
    <name type="ordered locus">SE_1354</name>
</gene>
<dbReference type="EMBL" id="AE015929">
    <property type="protein sequence ID" value="AAO04953.1"/>
    <property type="molecule type" value="Genomic_DNA"/>
</dbReference>
<dbReference type="RefSeq" id="NP_764909.1">
    <property type="nucleotide sequence ID" value="NC_004461.1"/>
</dbReference>
<dbReference type="RefSeq" id="WP_001830767.1">
    <property type="nucleotide sequence ID" value="NZ_WBME01000016.1"/>
</dbReference>
<dbReference type="SMR" id="Q8CS76"/>
<dbReference type="GeneID" id="93669309"/>
<dbReference type="KEGG" id="sep:SE_1354"/>
<dbReference type="PATRIC" id="fig|176280.10.peg.1323"/>
<dbReference type="eggNOG" id="COG0291">
    <property type="taxonomic scope" value="Bacteria"/>
</dbReference>
<dbReference type="HOGENOM" id="CLU_169643_3_0_9"/>
<dbReference type="OrthoDB" id="47476at2"/>
<dbReference type="PRO" id="PR:Q8CS76"/>
<dbReference type="Proteomes" id="UP000001411">
    <property type="component" value="Chromosome"/>
</dbReference>
<dbReference type="GO" id="GO:0022625">
    <property type="term" value="C:cytosolic large ribosomal subunit"/>
    <property type="evidence" value="ECO:0007669"/>
    <property type="project" value="TreeGrafter"/>
</dbReference>
<dbReference type="GO" id="GO:0003735">
    <property type="term" value="F:structural constituent of ribosome"/>
    <property type="evidence" value="ECO:0007669"/>
    <property type="project" value="InterPro"/>
</dbReference>
<dbReference type="GO" id="GO:0006412">
    <property type="term" value="P:translation"/>
    <property type="evidence" value="ECO:0007669"/>
    <property type="project" value="UniProtKB-UniRule"/>
</dbReference>
<dbReference type="FunFam" id="4.10.410.60:FF:000001">
    <property type="entry name" value="50S ribosomal protein L35"/>
    <property type="match status" value="1"/>
</dbReference>
<dbReference type="Gene3D" id="4.10.410.60">
    <property type="match status" value="1"/>
</dbReference>
<dbReference type="HAMAP" id="MF_00514">
    <property type="entry name" value="Ribosomal_bL35"/>
    <property type="match status" value="1"/>
</dbReference>
<dbReference type="InterPro" id="IPR001706">
    <property type="entry name" value="Ribosomal_bL35"/>
</dbReference>
<dbReference type="InterPro" id="IPR021137">
    <property type="entry name" value="Ribosomal_bL35-like"/>
</dbReference>
<dbReference type="InterPro" id="IPR018265">
    <property type="entry name" value="Ribosomal_bL35_CS"/>
</dbReference>
<dbReference type="InterPro" id="IPR037229">
    <property type="entry name" value="Ribosomal_bL35_sf"/>
</dbReference>
<dbReference type="NCBIfam" id="TIGR00001">
    <property type="entry name" value="rpmI_bact"/>
    <property type="match status" value="1"/>
</dbReference>
<dbReference type="PANTHER" id="PTHR33343">
    <property type="entry name" value="54S RIBOSOMAL PROTEIN BL35M"/>
    <property type="match status" value="1"/>
</dbReference>
<dbReference type="PANTHER" id="PTHR33343:SF1">
    <property type="entry name" value="LARGE RIBOSOMAL SUBUNIT PROTEIN BL35M"/>
    <property type="match status" value="1"/>
</dbReference>
<dbReference type="Pfam" id="PF01632">
    <property type="entry name" value="Ribosomal_L35p"/>
    <property type="match status" value="1"/>
</dbReference>
<dbReference type="PRINTS" id="PR00064">
    <property type="entry name" value="RIBOSOMALL35"/>
</dbReference>
<dbReference type="SUPFAM" id="SSF143034">
    <property type="entry name" value="L35p-like"/>
    <property type="match status" value="1"/>
</dbReference>
<dbReference type="PROSITE" id="PS00936">
    <property type="entry name" value="RIBOSOMAL_L35"/>
    <property type="match status" value="1"/>
</dbReference>
<proteinExistence type="inferred from homology"/>
<evidence type="ECO:0000255" key="1">
    <source>
        <dbReference type="HAMAP-Rule" id="MF_00514"/>
    </source>
</evidence>
<evidence type="ECO:0000256" key="2">
    <source>
        <dbReference type="SAM" id="MobiDB-lite"/>
    </source>
</evidence>
<evidence type="ECO:0000305" key="3"/>
<accession>Q8CS76</accession>
<protein>
    <recommendedName>
        <fullName evidence="1">Large ribosomal subunit protein bL35</fullName>
    </recommendedName>
    <alternativeName>
        <fullName evidence="3">50S ribosomal protein L35</fullName>
    </alternativeName>
</protein>
<organism>
    <name type="scientific">Staphylococcus epidermidis (strain ATCC 12228 / FDA PCI 1200)</name>
    <dbReference type="NCBI Taxonomy" id="176280"/>
    <lineage>
        <taxon>Bacteria</taxon>
        <taxon>Bacillati</taxon>
        <taxon>Bacillota</taxon>
        <taxon>Bacilli</taxon>
        <taxon>Bacillales</taxon>
        <taxon>Staphylococcaceae</taxon>
        <taxon>Staphylococcus</taxon>
    </lineage>
</organism>
<name>RL35_STAES</name>
<keyword id="KW-0687">Ribonucleoprotein</keyword>
<keyword id="KW-0689">Ribosomal protein</keyword>
<feature type="chain" id="PRO_0000177423" description="Large ribosomal subunit protein bL35">
    <location>
        <begin position="1"/>
        <end position="66"/>
    </location>
</feature>
<feature type="region of interest" description="Disordered" evidence="2">
    <location>
        <begin position="1"/>
        <end position="28"/>
    </location>
</feature>
<feature type="compositionally biased region" description="Basic residues" evidence="2">
    <location>
        <begin position="1"/>
        <end position="16"/>
    </location>
</feature>
<reference key="1">
    <citation type="journal article" date="2003" name="Mol. Microbiol.">
        <title>Genome-based analysis of virulence genes in a non-biofilm-forming Staphylococcus epidermidis strain (ATCC 12228).</title>
        <authorList>
            <person name="Zhang Y.-Q."/>
            <person name="Ren S.-X."/>
            <person name="Li H.-L."/>
            <person name="Wang Y.-X."/>
            <person name="Fu G."/>
            <person name="Yang J."/>
            <person name="Qin Z.-Q."/>
            <person name="Miao Y.-G."/>
            <person name="Wang W.-Y."/>
            <person name="Chen R.-S."/>
            <person name="Shen Y."/>
            <person name="Chen Z."/>
            <person name="Yuan Z.-H."/>
            <person name="Zhao G.-P."/>
            <person name="Qu D."/>
            <person name="Danchin A."/>
            <person name="Wen Y.-M."/>
        </authorList>
    </citation>
    <scope>NUCLEOTIDE SEQUENCE [LARGE SCALE GENOMIC DNA]</scope>
    <source>
        <strain>ATCC 12228 / FDA PCI 1200</strain>
    </source>
</reference>